<dbReference type="EC" id="2.4.1.1"/>
<dbReference type="EMBL" id="AE000516">
    <property type="protein sequence ID" value="AAK45634.1"/>
    <property type="molecule type" value="Genomic_DNA"/>
</dbReference>
<dbReference type="PIR" id="D70770">
    <property type="entry name" value="D70770"/>
</dbReference>
<dbReference type="RefSeq" id="WP_003900319.1">
    <property type="nucleotide sequence ID" value="NZ_KK341227.1"/>
</dbReference>
<dbReference type="SMR" id="P9WMW0"/>
<dbReference type="CAZy" id="GT35">
    <property type="family name" value="Glycosyltransferase Family 35"/>
</dbReference>
<dbReference type="KEGG" id="mtc:MT1370"/>
<dbReference type="PATRIC" id="fig|83331.31.peg.1477"/>
<dbReference type="HOGENOM" id="CLU_015112_0_0_11"/>
<dbReference type="Proteomes" id="UP000001020">
    <property type="component" value="Chromosome"/>
</dbReference>
<dbReference type="GO" id="GO:0008184">
    <property type="term" value="F:glycogen phosphorylase activity"/>
    <property type="evidence" value="ECO:0007669"/>
    <property type="project" value="InterPro"/>
</dbReference>
<dbReference type="GO" id="GO:0030170">
    <property type="term" value="F:pyridoxal phosphate binding"/>
    <property type="evidence" value="ECO:0007669"/>
    <property type="project" value="InterPro"/>
</dbReference>
<dbReference type="GO" id="GO:0005977">
    <property type="term" value="P:glycogen metabolic process"/>
    <property type="evidence" value="ECO:0007669"/>
    <property type="project" value="UniProtKB-KW"/>
</dbReference>
<dbReference type="CDD" id="cd04299">
    <property type="entry name" value="GT35_Glycogen_Phosphorylase-like"/>
    <property type="match status" value="1"/>
</dbReference>
<dbReference type="FunFam" id="3.40.50.2000:FF:000341">
    <property type="entry name" value="Glycogen phosphorylase"/>
    <property type="match status" value="1"/>
</dbReference>
<dbReference type="Gene3D" id="3.40.50.2000">
    <property type="entry name" value="Glycogen Phosphorylase B"/>
    <property type="match status" value="3"/>
</dbReference>
<dbReference type="InterPro" id="IPR011834">
    <property type="entry name" value="Agluc_phsphrylas"/>
</dbReference>
<dbReference type="InterPro" id="IPR000811">
    <property type="entry name" value="Glyco_trans_35"/>
</dbReference>
<dbReference type="InterPro" id="IPR052182">
    <property type="entry name" value="Glycogen/Maltodextrin_Phosph"/>
</dbReference>
<dbReference type="InterPro" id="IPR024517">
    <property type="entry name" value="Glycogen_phosphorylase_DUF3417"/>
</dbReference>
<dbReference type="InterPro" id="IPR035090">
    <property type="entry name" value="Pyridoxal_P_attach_site"/>
</dbReference>
<dbReference type="NCBIfam" id="TIGR02094">
    <property type="entry name" value="more_P_ylases"/>
    <property type="match status" value="1"/>
</dbReference>
<dbReference type="PANTHER" id="PTHR42655">
    <property type="entry name" value="GLYCOGEN PHOSPHORYLASE"/>
    <property type="match status" value="1"/>
</dbReference>
<dbReference type="PANTHER" id="PTHR42655:SF1">
    <property type="entry name" value="GLYCOGEN PHOSPHORYLASE"/>
    <property type="match status" value="1"/>
</dbReference>
<dbReference type="Pfam" id="PF11897">
    <property type="entry name" value="DUF3417"/>
    <property type="match status" value="1"/>
</dbReference>
<dbReference type="Pfam" id="PF00343">
    <property type="entry name" value="Phosphorylase"/>
    <property type="match status" value="1"/>
</dbReference>
<dbReference type="PIRSF" id="PIRSF000460">
    <property type="entry name" value="Pprylas_GlgP"/>
    <property type="match status" value="1"/>
</dbReference>
<dbReference type="SUPFAM" id="SSF53756">
    <property type="entry name" value="UDP-Glycosyltransferase/glycogen phosphorylase"/>
    <property type="match status" value="1"/>
</dbReference>
<dbReference type="PROSITE" id="PS00102">
    <property type="entry name" value="PHOSPHORYLASE"/>
    <property type="match status" value="1"/>
</dbReference>
<proteinExistence type="inferred from homology"/>
<keyword id="KW-0021">Allosteric enzyme</keyword>
<keyword id="KW-0119">Carbohydrate metabolism</keyword>
<keyword id="KW-0321">Glycogen metabolism</keyword>
<keyword id="KW-0328">Glycosyltransferase</keyword>
<keyword id="KW-0663">Pyridoxal phosphate</keyword>
<keyword id="KW-1185">Reference proteome</keyword>
<keyword id="KW-0808">Transferase</keyword>
<reference key="1">
    <citation type="journal article" date="2002" name="J. Bacteriol.">
        <title>Whole-genome comparison of Mycobacterium tuberculosis clinical and laboratory strains.</title>
        <authorList>
            <person name="Fleischmann R.D."/>
            <person name="Alland D."/>
            <person name="Eisen J.A."/>
            <person name="Carpenter L."/>
            <person name="White O."/>
            <person name="Peterson J.D."/>
            <person name="DeBoy R.T."/>
            <person name="Dodson R.J."/>
            <person name="Gwinn M.L."/>
            <person name="Haft D.H."/>
            <person name="Hickey E.K."/>
            <person name="Kolonay J.F."/>
            <person name="Nelson W.C."/>
            <person name="Umayam L.A."/>
            <person name="Ermolaeva M.D."/>
            <person name="Salzberg S.L."/>
            <person name="Delcher A."/>
            <person name="Utterback T.R."/>
            <person name="Weidman J.F."/>
            <person name="Khouri H.M."/>
            <person name="Gill J."/>
            <person name="Mikula A."/>
            <person name="Bishai W."/>
            <person name="Jacobs W.R. Jr."/>
            <person name="Venter J.C."/>
            <person name="Fraser C.M."/>
        </authorList>
    </citation>
    <scope>NUCLEOTIDE SEQUENCE [LARGE SCALE GENOMIC DNA]</scope>
    <source>
        <strain>CDC 1551 / Oshkosh</strain>
    </source>
</reference>
<name>PHSG_MYCTO</name>
<organism>
    <name type="scientific">Mycobacterium tuberculosis (strain CDC 1551 / Oshkosh)</name>
    <dbReference type="NCBI Taxonomy" id="83331"/>
    <lineage>
        <taxon>Bacteria</taxon>
        <taxon>Bacillati</taxon>
        <taxon>Actinomycetota</taxon>
        <taxon>Actinomycetes</taxon>
        <taxon>Mycobacteriales</taxon>
        <taxon>Mycobacteriaceae</taxon>
        <taxon>Mycobacterium</taxon>
        <taxon>Mycobacterium tuberculosis complex</taxon>
    </lineage>
</organism>
<accession>P9WMW0</accession>
<accession>L0T6B6</accession>
<accession>Q10639</accession>
<comment type="function">
    <text evidence="1">Phosphorylase is an important allosteric enzyme in carbohydrate metabolism. Enzymes from different sources differ in their regulatory mechanisms and in their natural substrates. However, all known phosphorylases share catalytic and structural properties (By similarity).</text>
</comment>
<comment type="catalytic activity">
    <reaction>
        <text>[(1-&gt;4)-alpha-D-glucosyl](n) + phosphate = [(1-&gt;4)-alpha-D-glucosyl](n-1) + alpha-D-glucose 1-phosphate</text>
        <dbReference type="Rhea" id="RHEA:41732"/>
        <dbReference type="Rhea" id="RHEA-COMP:9584"/>
        <dbReference type="Rhea" id="RHEA-COMP:9586"/>
        <dbReference type="ChEBI" id="CHEBI:15444"/>
        <dbReference type="ChEBI" id="CHEBI:43474"/>
        <dbReference type="ChEBI" id="CHEBI:58601"/>
        <dbReference type="EC" id="2.4.1.1"/>
    </reaction>
</comment>
<comment type="cofactor">
    <cofactor evidence="1">
        <name>pyridoxal 5'-phosphate</name>
        <dbReference type="ChEBI" id="CHEBI:597326"/>
    </cofactor>
</comment>
<comment type="similarity">
    <text evidence="2">Belongs to the glycogen phosphorylase family.</text>
</comment>
<feature type="chain" id="PRO_0000427233" description="Glycogen phosphorylase">
    <location>
        <begin position="1"/>
        <end position="863"/>
    </location>
</feature>
<feature type="modified residue" description="N6-(pyridoxal phosphate)lysine" evidence="1">
    <location>
        <position position="618"/>
    </location>
</feature>
<gene>
    <name type="primary">glgP</name>
    <name type="ordered locus">MT1370</name>
</gene>
<protein>
    <recommendedName>
        <fullName>Glycogen phosphorylase</fullName>
        <ecNumber>2.4.1.1</ecNumber>
    </recommendedName>
</protein>
<evidence type="ECO:0000250" key="1"/>
<evidence type="ECO:0000305" key="2"/>
<sequence length="863" mass="95516">MKALRRFTVRAHLPERLAALDQLSTNLRWSWDKPTQDLFAAIDPALWEQCGHDPVALLGAVNPARLDELALDAEFLGALDELAADLNDYLSRPLWYQEQQDAGVAAQALPTGIAYFSLEFGVAEVLPNYSGGLGILAGDHLKSASDLGVPLIAVGLYYRSGYFRQSLTADGWQHETYPSLDPQGLPLRLLTDANGDPVLVEVALGDNAVLRARIWVAQVGRVPLLLLDSDIPENEHDLRNVTDRLYGGDQEHRIEQEILAGIGGVRAIRAYTAVEKLTPPEVFHMNEGHAGFLGIERIRELVTDAGLDFDTALTVVRSSTVFTTHTPVPAGIDRFPLEMVQRYVNDQRGDGRSRLLPGLPADRIVALGAEDDPAKFNMAHMGLRLAQRANGVSLLHGRVSRAMFNELWAGFDPDEVPIGSVTNGVHAPTWAAPQWLQLGRELAGSDSLREPVVWQRLHQVDPAHLWWIRSQLRSMLVEDVRARLRQSWLERGATDAELGWIATAFDPNVLTVGFARRVPTYKRLTLMLRDPDRLEQLLLDEQRPIQLIVAGKSHPADDGGKALIQQVVRFADRPQVRHRIAFLPNYDMSMARLLYWGCDVWLNNPLRPLEACGTSGMKSALNGGLNLSIRDGWWDEWYDGENGWEIPSADGVADENRRDDLEAGALYDLLAQAVAPKFYERDERGVPQRWVEMVRHTLQTLGPKVLASRMVRDYVEHYYAPAAQSFRRTAGAQFDAARELADYRRRAEEAWPKIEIADVDSTGLPDTPLLGSQLTLTATVRLAGLRPNDVTVQGVLGRVDAGDVLMDPVTVEMAHTGTGDGGYEIFSTTTPLPLAGPVGYTVRVLPRHPMLAASNELGLVTLA</sequence>